<reference key="1">
    <citation type="journal article" date="2006" name="Nat. Biotechnol.">
        <title>Complete genome sequence of the entomopathogenic and metabolically versatile soil bacterium Pseudomonas entomophila.</title>
        <authorList>
            <person name="Vodovar N."/>
            <person name="Vallenet D."/>
            <person name="Cruveiller S."/>
            <person name="Rouy Z."/>
            <person name="Barbe V."/>
            <person name="Acosta C."/>
            <person name="Cattolico L."/>
            <person name="Jubin C."/>
            <person name="Lajus A."/>
            <person name="Segurens B."/>
            <person name="Vacherie B."/>
            <person name="Wincker P."/>
            <person name="Weissenbach J."/>
            <person name="Lemaitre B."/>
            <person name="Medigue C."/>
            <person name="Boccard F."/>
        </authorList>
    </citation>
    <scope>NUCLEOTIDE SEQUENCE [LARGE SCALE GENOMIC DNA]</scope>
    <source>
        <strain>L48</strain>
    </source>
</reference>
<dbReference type="EC" id="2.4.2.9" evidence="1"/>
<dbReference type="EMBL" id="CT573326">
    <property type="protein sequence ID" value="CAK13796.1"/>
    <property type="molecule type" value="Genomic_DNA"/>
</dbReference>
<dbReference type="RefSeq" id="WP_011532223.1">
    <property type="nucleotide sequence ID" value="NC_008027.1"/>
</dbReference>
<dbReference type="SMR" id="Q1IEV9"/>
<dbReference type="STRING" id="384676.PSEEN0888"/>
<dbReference type="GeneID" id="97166298"/>
<dbReference type="KEGG" id="pen:PSEEN0888"/>
<dbReference type="eggNOG" id="COG0035">
    <property type="taxonomic scope" value="Bacteria"/>
</dbReference>
<dbReference type="HOGENOM" id="CLU_067096_2_2_6"/>
<dbReference type="OrthoDB" id="9781675at2"/>
<dbReference type="UniPathway" id="UPA00574">
    <property type="reaction ID" value="UER00636"/>
</dbReference>
<dbReference type="Proteomes" id="UP000000658">
    <property type="component" value="Chromosome"/>
</dbReference>
<dbReference type="GO" id="GO:0005525">
    <property type="term" value="F:GTP binding"/>
    <property type="evidence" value="ECO:0007669"/>
    <property type="project" value="UniProtKB-KW"/>
</dbReference>
<dbReference type="GO" id="GO:0000287">
    <property type="term" value="F:magnesium ion binding"/>
    <property type="evidence" value="ECO:0007669"/>
    <property type="project" value="UniProtKB-UniRule"/>
</dbReference>
<dbReference type="GO" id="GO:0004845">
    <property type="term" value="F:uracil phosphoribosyltransferase activity"/>
    <property type="evidence" value="ECO:0007669"/>
    <property type="project" value="UniProtKB-UniRule"/>
</dbReference>
<dbReference type="GO" id="GO:0044206">
    <property type="term" value="P:UMP salvage"/>
    <property type="evidence" value="ECO:0007669"/>
    <property type="project" value="UniProtKB-UniRule"/>
</dbReference>
<dbReference type="GO" id="GO:0006223">
    <property type="term" value="P:uracil salvage"/>
    <property type="evidence" value="ECO:0007669"/>
    <property type="project" value="InterPro"/>
</dbReference>
<dbReference type="CDD" id="cd06223">
    <property type="entry name" value="PRTases_typeI"/>
    <property type="match status" value="1"/>
</dbReference>
<dbReference type="FunFam" id="3.40.50.2020:FF:000003">
    <property type="entry name" value="Uracil phosphoribosyltransferase"/>
    <property type="match status" value="1"/>
</dbReference>
<dbReference type="Gene3D" id="3.40.50.2020">
    <property type="match status" value="1"/>
</dbReference>
<dbReference type="HAMAP" id="MF_01218_B">
    <property type="entry name" value="Upp_B"/>
    <property type="match status" value="1"/>
</dbReference>
<dbReference type="InterPro" id="IPR000836">
    <property type="entry name" value="PRibTrfase_dom"/>
</dbReference>
<dbReference type="InterPro" id="IPR029057">
    <property type="entry name" value="PRTase-like"/>
</dbReference>
<dbReference type="InterPro" id="IPR034332">
    <property type="entry name" value="Upp_B"/>
</dbReference>
<dbReference type="InterPro" id="IPR050054">
    <property type="entry name" value="UPRTase/APRTase"/>
</dbReference>
<dbReference type="InterPro" id="IPR005765">
    <property type="entry name" value="Ura_phspho_trans"/>
</dbReference>
<dbReference type="NCBIfam" id="NF001097">
    <property type="entry name" value="PRK00129.1"/>
    <property type="match status" value="1"/>
</dbReference>
<dbReference type="NCBIfam" id="TIGR01091">
    <property type="entry name" value="upp"/>
    <property type="match status" value="1"/>
</dbReference>
<dbReference type="PANTHER" id="PTHR32315">
    <property type="entry name" value="ADENINE PHOSPHORIBOSYLTRANSFERASE"/>
    <property type="match status" value="1"/>
</dbReference>
<dbReference type="PANTHER" id="PTHR32315:SF4">
    <property type="entry name" value="URACIL PHOSPHORIBOSYLTRANSFERASE, CHLOROPLASTIC"/>
    <property type="match status" value="1"/>
</dbReference>
<dbReference type="Pfam" id="PF14681">
    <property type="entry name" value="UPRTase"/>
    <property type="match status" value="1"/>
</dbReference>
<dbReference type="SUPFAM" id="SSF53271">
    <property type="entry name" value="PRTase-like"/>
    <property type="match status" value="1"/>
</dbReference>
<comment type="function">
    <text evidence="1">Catalyzes the conversion of uracil and 5-phospho-alpha-D-ribose 1-diphosphate (PRPP) to UMP and diphosphate.</text>
</comment>
<comment type="catalytic activity">
    <reaction evidence="1">
        <text>UMP + diphosphate = 5-phospho-alpha-D-ribose 1-diphosphate + uracil</text>
        <dbReference type="Rhea" id="RHEA:13017"/>
        <dbReference type="ChEBI" id="CHEBI:17568"/>
        <dbReference type="ChEBI" id="CHEBI:33019"/>
        <dbReference type="ChEBI" id="CHEBI:57865"/>
        <dbReference type="ChEBI" id="CHEBI:58017"/>
        <dbReference type="EC" id="2.4.2.9"/>
    </reaction>
</comment>
<comment type="cofactor">
    <cofactor evidence="1">
        <name>Mg(2+)</name>
        <dbReference type="ChEBI" id="CHEBI:18420"/>
    </cofactor>
    <text evidence="1">Binds 1 Mg(2+) ion per subunit. The magnesium is bound as Mg-PRPP.</text>
</comment>
<comment type="activity regulation">
    <text evidence="1">Allosterically activated by GTP.</text>
</comment>
<comment type="pathway">
    <text evidence="1">Pyrimidine metabolism; UMP biosynthesis via salvage pathway; UMP from uracil: step 1/1.</text>
</comment>
<comment type="similarity">
    <text evidence="1">Belongs to the UPRTase family.</text>
</comment>
<sequence>MPTREIRHPLIRHKLGLMRRADISTKNFRELAQEVGALLTYEATQDLPLETYEIDGWCGKVQVEKIAGKKITVVPILRAGIGMLDGVLSLIPGAKVSAVGVARNEETLEAHTYLEKLAPDINQRLALIIDPMLATGGSMVATIDLLKKAGCKEIRAMVLVAAPEGIEVVEKAHPDVQIYTASIDQRLNEHGYIVPGLGDAGDKIFGTKQKDA</sequence>
<feature type="chain" id="PRO_1000053761" description="Uracil phosphoribosyltransferase">
    <location>
        <begin position="1"/>
        <end position="212"/>
    </location>
</feature>
<feature type="binding site" evidence="1">
    <location>
        <position position="78"/>
    </location>
    <ligand>
        <name>5-phospho-alpha-D-ribose 1-diphosphate</name>
        <dbReference type="ChEBI" id="CHEBI:58017"/>
    </ligand>
</feature>
<feature type="binding site" evidence="1">
    <location>
        <position position="103"/>
    </location>
    <ligand>
        <name>5-phospho-alpha-D-ribose 1-diphosphate</name>
        <dbReference type="ChEBI" id="CHEBI:58017"/>
    </ligand>
</feature>
<feature type="binding site" evidence="1">
    <location>
        <begin position="130"/>
        <end position="138"/>
    </location>
    <ligand>
        <name>5-phospho-alpha-D-ribose 1-diphosphate</name>
        <dbReference type="ChEBI" id="CHEBI:58017"/>
    </ligand>
</feature>
<feature type="binding site" evidence="1">
    <location>
        <position position="193"/>
    </location>
    <ligand>
        <name>uracil</name>
        <dbReference type="ChEBI" id="CHEBI:17568"/>
    </ligand>
</feature>
<feature type="binding site" evidence="1">
    <location>
        <begin position="198"/>
        <end position="200"/>
    </location>
    <ligand>
        <name>uracil</name>
        <dbReference type="ChEBI" id="CHEBI:17568"/>
    </ligand>
</feature>
<feature type="binding site" evidence="1">
    <location>
        <position position="199"/>
    </location>
    <ligand>
        <name>5-phospho-alpha-D-ribose 1-diphosphate</name>
        <dbReference type="ChEBI" id="CHEBI:58017"/>
    </ligand>
</feature>
<proteinExistence type="inferred from homology"/>
<accession>Q1IEV9</accession>
<gene>
    <name evidence="1" type="primary">upp</name>
    <name type="ordered locus">PSEEN0888</name>
</gene>
<organism>
    <name type="scientific">Pseudomonas entomophila (strain L48)</name>
    <dbReference type="NCBI Taxonomy" id="384676"/>
    <lineage>
        <taxon>Bacteria</taxon>
        <taxon>Pseudomonadati</taxon>
        <taxon>Pseudomonadota</taxon>
        <taxon>Gammaproteobacteria</taxon>
        <taxon>Pseudomonadales</taxon>
        <taxon>Pseudomonadaceae</taxon>
        <taxon>Pseudomonas</taxon>
    </lineage>
</organism>
<evidence type="ECO:0000255" key="1">
    <source>
        <dbReference type="HAMAP-Rule" id="MF_01218"/>
    </source>
</evidence>
<keyword id="KW-0021">Allosteric enzyme</keyword>
<keyword id="KW-0328">Glycosyltransferase</keyword>
<keyword id="KW-0342">GTP-binding</keyword>
<keyword id="KW-0460">Magnesium</keyword>
<keyword id="KW-0547">Nucleotide-binding</keyword>
<keyword id="KW-0808">Transferase</keyword>
<protein>
    <recommendedName>
        <fullName evidence="1">Uracil phosphoribosyltransferase</fullName>
        <ecNumber evidence="1">2.4.2.9</ecNumber>
    </recommendedName>
    <alternativeName>
        <fullName evidence="1">UMP pyrophosphorylase</fullName>
    </alternativeName>
    <alternativeName>
        <fullName evidence="1">UPRTase</fullName>
    </alternativeName>
</protein>
<name>UPP_PSEE4</name>